<feature type="chain" id="PRO_0000326162" description="Tubulin polyglutamylase ttll6">
    <location>
        <begin position="1"/>
        <end position="778"/>
    </location>
</feature>
<feature type="domain" description="TTL" evidence="5">
    <location>
        <begin position="51"/>
        <end position="393"/>
    </location>
</feature>
<feature type="region of interest" description="Disordered" evidence="6">
    <location>
        <begin position="1"/>
        <end position="43"/>
    </location>
</feature>
<feature type="region of interest" description="c-MTBD region" evidence="3">
    <location>
        <begin position="365"/>
        <end position="445"/>
    </location>
</feature>
<feature type="region of interest" description="Disordered" evidence="6">
    <location>
        <begin position="402"/>
        <end position="422"/>
    </location>
</feature>
<feature type="region of interest" description="Disordered" evidence="6">
    <location>
        <begin position="485"/>
        <end position="542"/>
    </location>
</feature>
<feature type="region of interest" description="Disordered" evidence="6">
    <location>
        <begin position="758"/>
        <end position="778"/>
    </location>
</feature>
<feature type="compositionally biased region" description="Basic and acidic residues" evidence="6">
    <location>
        <begin position="402"/>
        <end position="418"/>
    </location>
</feature>
<feature type="compositionally biased region" description="Basic and acidic residues" evidence="6">
    <location>
        <begin position="485"/>
        <end position="510"/>
    </location>
</feature>
<feature type="compositionally biased region" description="Basic and acidic residues" evidence="6">
    <location>
        <begin position="533"/>
        <end position="542"/>
    </location>
</feature>
<feature type="compositionally biased region" description="Basic and acidic residues" evidence="6">
    <location>
        <begin position="760"/>
        <end position="778"/>
    </location>
</feature>
<feature type="binding site" evidence="1">
    <location>
        <position position="168"/>
    </location>
    <ligand>
        <name>ATP</name>
        <dbReference type="ChEBI" id="CHEBI:30616"/>
    </ligand>
</feature>
<feature type="binding site" evidence="1">
    <location>
        <begin position="174"/>
        <end position="175"/>
    </location>
    <ligand>
        <name>ATP</name>
        <dbReference type="ChEBI" id="CHEBI:30616"/>
    </ligand>
</feature>
<feature type="binding site" evidence="1">
    <location>
        <position position="174"/>
    </location>
    <ligand>
        <name>a protein</name>
        <dbReference type="ChEBI" id="CHEBI:16541"/>
    </ligand>
    <ligandPart>
        <name>L-glutamate residue</name>
        <dbReference type="ChEBI" id="CHEBI:29973"/>
        <note>L-glutamate acceptor residue in protein target</note>
    </ligandPart>
</feature>
<feature type="binding site" evidence="1">
    <location>
        <begin position="196"/>
        <end position="199"/>
    </location>
    <ligand>
        <name>ATP</name>
        <dbReference type="ChEBI" id="CHEBI:30616"/>
    </ligand>
</feature>
<feature type="binding site" evidence="1">
    <location>
        <begin position="209"/>
        <end position="211"/>
    </location>
    <ligand>
        <name>ATP</name>
        <dbReference type="ChEBI" id="CHEBI:30616"/>
    </ligand>
</feature>
<feature type="binding site" evidence="1">
    <location>
        <position position="235"/>
    </location>
    <ligand>
        <name>L-glutamate</name>
        <dbReference type="ChEBI" id="CHEBI:29985"/>
    </ligand>
</feature>
<feature type="binding site" evidence="1">
    <location>
        <begin position="257"/>
        <end position="258"/>
    </location>
    <ligand>
        <name>ATP</name>
        <dbReference type="ChEBI" id="CHEBI:30616"/>
    </ligand>
</feature>
<feature type="binding site" evidence="1">
    <location>
        <position position="259"/>
    </location>
    <ligand>
        <name>L-glutamate</name>
        <dbReference type="ChEBI" id="CHEBI:29985"/>
    </ligand>
</feature>
<feature type="binding site" evidence="1">
    <location>
        <position position="277"/>
    </location>
    <ligand>
        <name>L-glutamate</name>
        <dbReference type="ChEBI" id="CHEBI:29985"/>
    </ligand>
</feature>
<feature type="binding site" evidence="1">
    <location>
        <position position="340"/>
    </location>
    <ligand>
        <name>Mg(2+)</name>
        <dbReference type="ChEBI" id="CHEBI:18420"/>
        <label>1</label>
    </ligand>
</feature>
<feature type="binding site" evidence="1">
    <location>
        <position position="353"/>
    </location>
    <ligand>
        <name>Mg(2+)</name>
        <dbReference type="ChEBI" id="CHEBI:18420"/>
        <label>1</label>
    </ligand>
</feature>
<feature type="binding site" evidence="1">
    <location>
        <position position="353"/>
    </location>
    <ligand>
        <name>Mg(2+)</name>
        <dbReference type="ChEBI" id="CHEBI:18420"/>
        <label>2</label>
    </ligand>
</feature>
<feature type="binding site" evidence="1">
    <location>
        <position position="355"/>
    </location>
    <ligand>
        <name>Mg(2+)</name>
        <dbReference type="ChEBI" id="CHEBI:18420"/>
        <label>2</label>
    </ligand>
</feature>
<feature type="binding site" evidence="1">
    <location>
        <position position="356"/>
    </location>
    <ligand>
        <name>a protein</name>
        <dbReference type="ChEBI" id="CHEBI:16541"/>
    </ligand>
    <ligandPart>
        <name>L-glutamate residue</name>
        <dbReference type="ChEBI" id="CHEBI:29973"/>
        <note>L-glutamate acceptor residue in protein target</note>
    </ligandPart>
</feature>
<feature type="binding site" evidence="1">
    <location>
        <position position="371"/>
    </location>
    <ligand>
        <name>L-glutamate</name>
        <dbReference type="ChEBI" id="CHEBI:29985"/>
    </ligand>
</feature>
<feature type="site" description="Essential for specifying alpha-elongation versus initiation step of the polyglutamylase activity" evidence="1">
    <location>
        <position position="174"/>
    </location>
</feature>
<feature type="site" description="Important for specifying alpha-elongation versus initiation step of the polyglutamylase activity" evidence="1">
    <location>
        <position position="356"/>
    </location>
</feature>
<accession>A8CVX7</accession>
<gene>
    <name evidence="10" type="primary">ttll6</name>
</gene>
<organism>
    <name type="scientific">Danio rerio</name>
    <name type="common">Zebrafish</name>
    <name type="synonym">Brachydanio rerio</name>
    <dbReference type="NCBI Taxonomy" id="7955"/>
    <lineage>
        <taxon>Eukaryota</taxon>
        <taxon>Metazoa</taxon>
        <taxon>Chordata</taxon>
        <taxon>Craniata</taxon>
        <taxon>Vertebrata</taxon>
        <taxon>Euteleostomi</taxon>
        <taxon>Actinopterygii</taxon>
        <taxon>Neopterygii</taxon>
        <taxon>Teleostei</taxon>
        <taxon>Ostariophysi</taxon>
        <taxon>Cypriniformes</taxon>
        <taxon>Danionidae</taxon>
        <taxon>Danioninae</taxon>
        <taxon>Danio</taxon>
    </lineage>
</organism>
<keyword id="KW-0067">ATP-binding</keyword>
<keyword id="KW-0966">Cell projection</keyword>
<keyword id="KW-0969">Cilium</keyword>
<keyword id="KW-0970">Cilium biogenesis/degradation</keyword>
<keyword id="KW-0963">Cytoplasm</keyword>
<keyword id="KW-0206">Cytoskeleton</keyword>
<keyword id="KW-0436">Ligase</keyword>
<keyword id="KW-0460">Magnesium</keyword>
<keyword id="KW-0479">Metal-binding</keyword>
<keyword id="KW-0493">Microtubule</keyword>
<keyword id="KW-0547">Nucleotide-binding</keyword>
<keyword id="KW-1185">Reference proteome</keyword>
<sequence>MGTPAERSVSEVCRCEPDPGLEGEGWGSDTHAEPSNTPIPLPVANKKKKRKKKLWINLTNCKYESVRRAARRYGIREAAEGEDWTLYWTDCSVSLDRVMDMKRYQKINHFPGMNEICRKDLLARNMNRMLKLFPKEYNIFPRTWCLPADYSDFQAYTRAKKHKTFICKPDSGCQGRGIYLTKSSKDIRPGEHMICQVYMSKPFIIDGFKFDLRIYVLVTSCDPFRVFMYDEGLVRFCTTHYTEPTVSNLEDVCMHLTNYAINKHSENFVRDEDTGSKRKLSSFKKHMEDMSYDTEKLWTDIEDAIIKTLISAHPILKHNYQTCFPNHASGSACFEILGFDVLLDRRLKPWLLEVNHSPSFTTDSRLDREVKDSLLYDTLVLINLGACDRRKITEEEKRRVKERLQQNRSREARNEEPRQSQAASMELMQKYEAKHMGGFRRIFPRDGGEKYEKYFQHSSSLFQETAASKAREECARQQLQELRLKQEQKERDKKGSRKQDLQGESAGEKVKPRKSQPPHKTSNSLPAMLELSSVREETPVSLERIEKEEAERVRELQQRETLLLNMGVVNQVRQLLQSANRLTQCINHSHEQASFPPHCRHDHKLDTLAEISWRQKNIYSTMQHQILARNRPSLPNVHSQTLQNRKPWPSLEHGLLQPVQTQAAALKHYGLEEMVASNAEEQANLIKATSAQQIPLTINGSFIWRQGSLSSSLAESRARATMLAMPPLGPGRLHRPTIFHDPNSLSIISTPAPLVPRPHLSHDLRKAPRRVLPHEHSL</sequence>
<reference key="1">
    <citation type="journal article" date="2007" name="Mol. Biol. Cell">
        <title>The zebrafish fleer gene encodes an essential regulator of cilia tubulin polyglutamylation.</title>
        <authorList>
            <person name="Pathak N.H."/>
            <person name="Obara T."/>
            <person name="Mangos S."/>
            <person name="Liu Y."/>
            <person name="Drummond I.A."/>
        </authorList>
    </citation>
    <scope>NUCLEOTIDE SEQUENCE [MRNA]</scope>
    <scope>FUNCTION</scope>
    <scope>DISRUPTION PHENOTYPE</scope>
</reference>
<reference key="2">
    <citation type="journal article" date="2013" name="Nature">
        <title>The zebrafish reference genome sequence and its relationship to the human genome.</title>
        <authorList>
            <person name="Howe K."/>
            <person name="Clark M.D."/>
            <person name="Torroja C.F."/>
            <person name="Torrance J."/>
            <person name="Berthelot C."/>
            <person name="Muffato M."/>
            <person name="Collins J.E."/>
            <person name="Humphray S."/>
            <person name="McLaren K."/>
            <person name="Matthews L."/>
            <person name="McLaren S."/>
            <person name="Sealy I."/>
            <person name="Caccamo M."/>
            <person name="Churcher C."/>
            <person name="Scott C."/>
            <person name="Barrett J.C."/>
            <person name="Koch R."/>
            <person name="Rauch G.J."/>
            <person name="White S."/>
            <person name="Chow W."/>
            <person name="Kilian B."/>
            <person name="Quintais L.T."/>
            <person name="Guerra-Assuncao J.A."/>
            <person name="Zhou Y."/>
            <person name="Gu Y."/>
            <person name="Yen J."/>
            <person name="Vogel J.H."/>
            <person name="Eyre T."/>
            <person name="Redmond S."/>
            <person name="Banerjee R."/>
            <person name="Chi J."/>
            <person name="Fu B."/>
            <person name="Langley E."/>
            <person name="Maguire S.F."/>
            <person name="Laird G.K."/>
            <person name="Lloyd D."/>
            <person name="Kenyon E."/>
            <person name="Donaldson S."/>
            <person name="Sehra H."/>
            <person name="Almeida-King J."/>
            <person name="Loveland J."/>
            <person name="Trevanion S."/>
            <person name="Jones M."/>
            <person name="Quail M."/>
            <person name="Willey D."/>
            <person name="Hunt A."/>
            <person name="Burton J."/>
            <person name="Sims S."/>
            <person name="McLay K."/>
            <person name="Plumb B."/>
            <person name="Davis J."/>
            <person name="Clee C."/>
            <person name="Oliver K."/>
            <person name="Clark R."/>
            <person name="Riddle C."/>
            <person name="Elliot D."/>
            <person name="Threadgold G."/>
            <person name="Harden G."/>
            <person name="Ware D."/>
            <person name="Begum S."/>
            <person name="Mortimore B."/>
            <person name="Kerry G."/>
            <person name="Heath P."/>
            <person name="Phillimore B."/>
            <person name="Tracey A."/>
            <person name="Corby N."/>
            <person name="Dunn M."/>
            <person name="Johnson C."/>
            <person name="Wood J."/>
            <person name="Clark S."/>
            <person name="Pelan S."/>
            <person name="Griffiths G."/>
            <person name="Smith M."/>
            <person name="Glithero R."/>
            <person name="Howden P."/>
            <person name="Barker N."/>
            <person name="Lloyd C."/>
            <person name="Stevens C."/>
            <person name="Harley J."/>
            <person name="Holt K."/>
            <person name="Panagiotidis G."/>
            <person name="Lovell J."/>
            <person name="Beasley H."/>
            <person name="Henderson C."/>
            <person name="Gordon D."/>
            <person name="Auger K."/>
            <person name="Wright D."/>
            <person name="Collins J."/>
            <person name="Raisen C."/>
            <person name="Dyer L."/>
            <person name="Leung K."/>
            <person name="Robertson L."/>
            <person name="Ambridge K."/>
            <person name="Leongamornlert D."/>
            <person name="McGuire S."/>
            <person name="Gilderthorp R."/>
            <person name="Griffiths C."/>
            <person name="Manthravadi D."/>
            <person name="Nichol S."/>
            <person name="Barker G."/>
            <person name="Whitehead S."/>
            <person name="Kay M."/>
            <person name="Brown J."/>
            <person name="Murnane C."/>
            <person name="Gray E."/>
            <person name="Humphries M."/>
            <person name="Sycamore N."/>
            <person name="Barker D."/>
            <person name="Saunders D."/>
            <person name="Wallis J."/>
            <person name="Babbage A."/>
            <person name="Hammond S."/>
            <person name="Mashreghi-Mohammadi M."/>
            <person name="Barr L."/>
            <person name="Martin S."/>
            <person name="Wray P."/>
            <person name="Ellington A."/>
            <person name="Matthews N."/>
            <person name="Ellwood M."/>
            <person name="Woodmansey R."/>
            <person name="Clark G."/>
            <person name="Cooper J."/>
            <person name="Tromans A."/>
            <person name="Grafham D."/>
            <person name="Skuce C."/>
            <person name="Pandian R."/>
            <person name="Andrews R."/>
            <person name="Harrison E."/>
            <person name="Kimberley A."/>
            <person name="Garnett J."/>
            <person name="Fosker N."/>
            <person name="Hall R."/>
            <person name="Garner P."/>
            <person name="Kelly D."/>
            <person name="Bird C."/>
            <person name="Palmer S."/>
            <person name="Gehring I."/>
            <person name="Berger A."/>
            <person name="Dooley C.M."/>
            <person name="Ersan-Urun Z."/>
            <person name="Eser C."/>
            <person name="Geiger H."/>
            <person name="Geisler M."/>
            <person name="Karotki L."/>
            <person name="Kirn A."/>
            <person name="Konantz J."/>
            <person name="Konantz M."/>
            <person name="Oberlander M."/>
            <person name="Rudolph-Geiger S."/>
            <person name="Teucke M."/>
            <person name="Lanz C."/>
            <person name="Raddatz G."/>
            <person name="Osoegawa K."/>
            <person name="Zhu B."/>
            <person name="Rapp A."/>
            <person name="Widaa S."/>
            <person name="Langford C."/>
            <person name="Yang F."/>
            <person name="Schuster S.C."/>
            <person name="Carter N.P."/>
            <person name="Harrow J."/>
            <person name="Ning Z."/>
            <person name="Herrero J."/>
            <person name="Searle S.M."/>
            <person name="Enright A."/>
            <person name="Geisler R."/>
            <person name="Plasterk R.H."/>
            <person name="Lee C."/>
            <person name="Westerfield M."/>
            <person name="de Jong P.J."/>
            <person name="Zon L.I."/>
            <person name="Postlethwait J.H."/>
            <person name="Nusslein-Volhard C."/>
            <person name="Hubbard T.J."/>
            <person name="Roest Crollius H."/>
            <person name="Rogers J."/>
            <person name="Stemple D.L."/>
        </authorList>
    </citation>
    <scope>NUCLEOTIDE SEQUENCE [LARGE SCALE GENOMIC DNA]</scope>
    <source>
        <strain>Tuebingen</strain>
    </source>
</reference>
<reference key="3">
    <citation type="journal article" date="2012" name="Nat. Genet.">
        <title>CEP41 is mutated in Joubert syndrome and is required for tubulin glutamylation at the cilium.</title>
        <authorList>
            <person name="Lee J.E."/>
            <person name="Silhavy J.L."/>
            <person name="Zaki M.S."/>
            <person name="Schroth J."/>
            <person name="Bielas S.L."/>
            <person name="Marsh S.E."/>
            <person name="Olvera J."/>
            <person name="Brancati F."/>
            <person name="Iannicelli M."/>
            <person name="Ikegami K."/>
            <person name="Schlossman A.M."/>
            <person name="Merriman B."/>
            <person name="Attie-Bitach T."/>
            <person name="Logan C.V."/>
            <person name="Glass I.A."/>
            <person name="Cluckey A."/>
            <person name="Louie C.M."/>
            <person name="Lee J.H."/>
            <person name="Raynes H.R."/>
            <person name="Rapin I."/>
            <person name="Castroviejo I.P."/>
            <person name="Setou M."/>
            <person name="Barbot C."/>
            <person name="Boltshauser E."/>
            <person name="Nelson S.F."/>
            <person name="Hildebrandt F."/>
            <person name="Johnson C.A."/>
            <person name="Doherty D.A."/>
            <person name="Valente E.M."/>
            <person name="Gleeson J.G."/>
        </authorList>
    </citation>
    <scope>FUNCTION</scope>
    <scope>SUBCELLULAR LOCATION</scope>
</reference>
<protein>
    <recommendedName>
        <fullName evidence="9">Tubulin polyglutamylase ttll6</fullName>
        <ecNumber evidence="1">6.3.2.-</ecNumber>
    </recommendedName>
    <alternativeName>
        <fullName evidence="1">Protein polyglutamylase TTLL6</fullName>
    </alternativeName>
    <alternativeName>
        <fullName>Tubulin tyrosine ligase-like family member 6</fullName>
    </alternativeName>
</protein>
<proteinExistence type="evidence at transcript level"/>
<name>TTLL6_DANRE</name>
<evidence type="ECO:0000250" key="1">
    <source>
        <dbReference type="UniProtKB" id="A4Q9E8"/>
    </source>
</evidence>
<evidence type="ECO:0000250" key="2">
    <source>
        <dbReference type="UniProtKB" id="Q6ZT98"/>
    </source>
</evidence>
<evidence type="ECO:0000250" key="3">
    <source>
        <dbReference type="UniProtKB" id="Q8N841"/>
    </source>
</evidence>
<evidence type="ECO:0000255" key="4"/>
<evidence type="ECO:0000255" key="5">
    <source>
        <dbReference type="PROSITE-ProRule" id="PRU00568"/>
    </source>
</evidence>
<evidence type="ECO:0000256" key="6">
    <source>
        <dbReference type="SAM" id="MobiDB-lite"/>
    </source>
</evidence>
<evidence type="ECO:0000269" key="7">
    <source>
    </source>
</evidence>
<evidence type="ECO:0000269" key="8">
    <source>
    </source>
</evidence>
<evidence type="ECO:0000303" key="9">
    <source>
    </source>
</evidence>
<evidence type="ECO:0000312" key="10">
    <source>
        <dbReference type="EMBL" id="ABV26100.1"/>
    </source>
</evidence>
<comment type="function">
    <text evidence="1 7 8">Polyglutamylase which modifies both tubulin and non-tubulin proteins, generating alpha-linked polyglutamate side chains on the gamma-carboxyl group of specific glutamate residues of target proteins (By similarity). Preferentially mediates ATP-dependent long polyglutamate chain elongation over the initiation step of the polyglutamylation reaction (By similarity). Preferentially modifies the alpha-tubulin tail over a beta-tail (By similarity). Mediates microtubule polyglutamylation in cilia axoneme, which is important for ciliary structural formation and motility (PubMed:17761526, PubMed:22246503). Polyglutamylates olfactory cilia, necessary for the regulation of ciliary structure and beating (PubMed:17761526).</text>
</comment>
<comment type="catalytic activity">
    <reaction evidence="1">
        <text>L-glutamyl-[protein] + L-glutamate + ATP = gamma-L-glutamyl-L-glutamyl-[protein] + ADP + phosphate + H(+)</text>
        <dbReference type="Rhea" id="RHEA:60144"/>
        <dbReference type="Rhea" id="RHEA-COMP:10208"/>
        <dbReference type="Rhea" id="RHEA-COMP:15517"/>
        <dbReference type="ChEBI" id="CHEBI:15378"/>
        <dbReference type="ChEBI" id="CHEBI:29973"/>
        <dbReference type="ChEBI" id="CHEBI:29985"/>
        <dbReference type="ChEBI" id="CHEBI:30616"/>
        <dbReference type="ChEBI" id="CHEBI:43474"/>
        <dbReference type="ChEBI" id="CHEBI:143622"/>
        <dbReference type="ChEBI" id="CHEBI:456216"/>
    </reaction>
    <physiologicalReaction direction="left-to-right" evidence="1">
        <dbReference type="Rhea" id="RHEA:60145"/>
    </physiologicalReaction>
</comment>
<comment type="catalytic activity">
    <reaction evidence="1">
        <text>(L-glutamyl)(n)-gamma-L-glutamyl-L-glutamyl-[protein] + L-glutamate + ATP = (L-glutamyl)(n+1)-gamma-L-glutamyl-L-glutamyl-[protein] + ADP + phosphate + H(+)</text>
        <dbReference type="Rhea" id="RHEA:60148"/>
        <dbReference type="Rhea" id="RHEA-COMP:15519"/>
        <dbReference type="Rhea" id="RHEA-COMP:15675"/>
        <dbReference type="ChEBI" id="CHEBI:15378"/>
        <dbReference type="ChEBI" id="CHEBI:29985"/>
        <dbReference type="ChEBI" id="CHEBI:30616"/>
        <dbReference type="ChEBI" id="CHEBI:43474"/>
        <dbReference type="ChEBI" id="CHEBI:143623"/>
        <dbReference type="ChEBI" id="CHEBI:456216"/>
    </reaction>
    <physiologicalReaction direction="left-to-right" evidence="1">
        <dbReference type="Rhea" id="RHEA:60149"/>
    </physiologicalReaction>
</comment>
<comment type="cofactor">
    <cofactor evidence="1">
        <name>Mg(2+)</name>
        <dbReference type="ChEBI" id="CHEBI:18420"/>
    </cofactor>
</comment>
<comment type="subcellular location">
    <subcellularLocation>
        <location evidence="1">Cytoplasm</location>
    </subcellularLocation>
    <subcellularLocation>
        <location evidence="1">Cytoplasm</location>
        <location evidence="1">Cytoskeleton</location>
    </subcellularLocation>
    <subcellularLocation>
        <location evidence="8">Cytoplasm</location>
        <location evidence="8">Cytoskeleton</location>
        <location evidence="8">Cilium axoneme</location>
    </subcellularLocation>
    <subcellularLocation>
        <location evidence="8">Cytoplasm</location>
        <location evidence="8">Cytoskeleton</location>
        <location evidence="8">Cilium basal body</location>
    </subcellularLocation>
    <text evidence="8">CEP41 is required for its transport between the basal body and the cilium axoneme.</text>
</comment>
<comment type="domain">
    <text evidence="2 3">The flexible c-MTBD (cationic microtubule binding domain) region mediates binding to microtubules. It is positively charged and becomes ordered when bound to microtubules: it interacts with a negatively charged patch on tubulin. The presence of positive charges in the c-MTBD region is essential for proper binding.</text>
</comment>
<comment type="domain">
    <text evidence="1">Gln-174 is the main determinant for regioselectivity, which segregates between initiases and elongases in all tubulin--tyrosine ligase family. A glutamine residue at this position is found in elongases TTLL6, TTLL9, TTLL11, TTLL13, TTLL10 and favors glutamate-chain elongation, whereas an arginine residue is found in initiases TTLL2, TTLL4, TTLL5, TTLL3, TTLL8 and favors initiation.</text>
</comment>
<comment type="disruption phenotype">
    <text evidence="7">Fish display a lack of tubulin polyglutamylation and cilia formation in olfactory placodes.</text>
</comment>
<comment type="similarity">
    <text evidence="4">Belongs to the tubulin--tyrosine ligase family.</text>
</comment>
<dbReference type="EC" id="6.3.2.-" evidence="1"/>
<dbReference type="EMBL" id="EU124004">
    <property type="protein sequence ID" value="ABV26100.1"/>
    <property type="molecule type" value="mRNA"/>
</dbReference>
<dbReference type="EMBL" id="BX001014">
    <property type="status" value="NOT_ANNOTATED_CDS"/>
    <property type="molecule type" value="Genomic_DNA"/>
</dbReference>
<dbReference type="RefSeq" id="NP_001098994.1">
    <property type="nucleotide sequence ID" value="NM_001105524.1"/>
</dbReference>
<dbReference type="SMR" id="A8CVX7"/>
<dbReference type="FunCoup" id="A8CVX7">
    <property type="interactions" value="25"/>
</dbReference>
<dbReference type="STRING" id="7955.ENSDARP00000124416"/>
<dbReference type="PaxDb" id="7955-ENSDARP00000124416"/>
<dbReference type="GeneID" id="564075"/>
<dbReference type="KEGG" id="dre:564075"/>
<dbReference type="AGR" id="ZFIN:ZDB-GENE-080107-1"/>
<dbReference type="CTD" id="284076"/>
<dbReference type="ZFIN" id="ZDB-GENE-080107-1">
    <property type="gene designation" value="ttll6"/>
</dbReference>
<dbReference type="eggNOG" id="KOG2158">
    <property type="taxonomic scope" value="Eukaryota"/>
</dbReference>
<dbReference type="InParanoid" id="A8CVX7"/>
<dbReference type="OrthoDB" id="202825at2759"/>
<dbReference type="PhylomeDB" id="A8CVX7"/>
<dbReference type="BRENDA" id="6.3.2.B3">
    <property type="organism ID" value="928"/>
</dbReference>
<dbReference type="PRO" id="PR:A8CVX7"/>
<dbReference type="Proteomes" id="UP000000437">
    <property type="component" value="Alternate scaffold 12"/>
</dbReference>
<dbReference type="Proteomes" id="UP000000437">
    <property type="component" value="Chromosome 12"/>
</dbReference>
<dbReference type="GO" id="GO:0036064">
    <property type="term" value="C:ciliary basal body"/>
    <property type="evidence" value="ECO:0000250"/>
    <property type="project" value="UniProtKB"/>
</dbReference>
<dbReference type="GO" id="GO:0005929">
    <property type="term" value="C:cilium"/>
    <property type="evidence" value="ECO:0000314"/>
    <property type="project" value="ZFIN"/>
</dbReference>
<dbReference type="GO" id="GO:0005737">
    <property type="term" value="C:cytoplasm"/>
    <property type="evidence" value="ECO:0007669"/>
    <property type="project" value="UniProtKB-SubCell"/>
</dbReference>
<dbReference type="GO" id="GO:0005874">
    <property type="term" value="C:microtubule"/>
    <property type="evidence" value="ECO:0007669"/>
    <property type="project" value="UniProtKB-KW"/>
</dbReference>
<dbReference type="GO" id="GO:0005524">
    <property type="term" value="F:ATP binding"/>
    <property type="evidence" value="ECO:0007669"/>
    <property type="project" value="UniProtKB-KW"/>
</dbReference>
<dbReference type="GO" id="GO:0046872">
    <property type="term" value="F:metal ion binding"/>
    <property type="evidence" value="ECO:0007669"/>
    <property type="project" value="UniProtKB-KW"/>
</dbReference>
<dbReference type="GO" id="GO:0070739">
    <property type="term" value="F:protein-glutamic acid ligase activity"/>
    <property type="evidence" value="ECO:0000250"/>
    <property type="project" value="UniProtKB"/>
</dbReference>
<dbReference type="GO" id="GO:0106438">
    <property type="term" value="F:protein-glutamic acid ligase activity, elongating"/>
    <property type="evidence" value="ECO:0007669"/>
    <property type="project" value="RHEA"/>
</dbReference>
<dbReference type="GO" id="GO:0106437">
    <property type="term" value="F:protein-glutamic acid ligase activity, initiating"/>
    <property type="evidence" value="ECO:0007669"/>
    <property type="project" value="RHEA"/>
</dbReference>
<dbReference type="GO" id="GO:0015631">
    <property type="term" value="F:tubulin binding"/>
    <property type="evidence" value="ECO:0000250"/>
    <property type="project" value="UniProtKB"/>
</dbReference>
<dbReference type="GO" id="GO:0070740">
    <property type="term" value="F:tubulin-glutamic acid ligase activity"/>
    <property type="evidence" value="ECO:0000315"/>
    <property type="project" value="ZFIN"/>
</dbReference>
<dbReference type="GO" id="GO:0035082">
    <property type="term" value="P:axoneme assembly"/>
    <property type="evidence" value="ECO:0000315"/>
    <property type="project" value="ZFIN"/>
</dbReference>
<dbReference type="GO" id="GO:0003341">
    <property type="term" value="P:cilium movement"/>
    <property type="evidence" value="ECO:0000316"/>
    <property type="project" value="ZFIN"/>
</dbReference>
<dbReference type="GO" id="GO:0001578">
    <property type="term" value="P:microtubule bundle formation"/>
    <property type="evidence" value="ECO:0000318"/>
    <property type="project" value="GO_Central"/>
</dbReference>
<dbReference type="GO" id="GO:0018095">
    <property type="term" value="P:protein polyglutamylation"/>
    <property type="evidence" value="ECO:0000315"/>
    <property type="project" value="UniProtKB"/>
</dbReference>
<dbReference type="GO" id="GO:0060296">
    <property type="term" value="P:regulation of cilium beat frequency involved in ciliary motility"/>
    <property type="evidence" value="ECO:0000250"/>
    <property type="project" value="UniProtKB"/>
</dbReference>
<dbReference type="FunFam" id="3.30.470.20:FF:000009">
    <property type="entry name" value="tubulin polyglutamylase TTLL5 isoform X1"/>
    <property type="match status" value="1"/>
</dbReference>
<dbReference type="Gene3D" id="3.30.470.20">
    <property type="entry name" value="ATP-grasp fold, B domain"/>
    <property type="match status" value="1"/>
</dbReference>
<dbReference type="InterPro" id="IPR004344">
    <property type="entry name" value="TTL/TTLL_fam"/>
</dbReference>
<dbReference type="PANTHER" id="PTHR12241">
    <property type="entry name" value="TUBULIN POLYGLUTAMYLASE"/>
    <property type="match status" value="1"/>
</dbReference>
<dbReference type="PANTHER" id="PTHR12241:SF161">
    <property type="entry name" value="TUBULIN POLYGLUTAMYLASE TTLL6"/>
    <property type="match status" value="1"/>
</dbReference>
<dbReference type="Pfam" id="PF03133">
    <property type="entry name" value="TTL"/>
    <property type="match status" value="1"/>
</dbReference>
<dbReference type="SUPFAM" id="SSF56059">
    <property type="entry name" value="Glutathione synthetase ATP-binding domain-like"/>
    <property type="match status" value="1"/>
</dbReference>
<dbReference type="PROSITE" id="PS51221">
    <property type="entry name" value="TTL"/>
    <property type="match status" value="1"/>
</dbReference>